<accession>Q6ZV70</accession>
<accession>A6NHE3</accession>
<evidence type="ECO:0000303" key="1">
    <source>
    </source>
</evidence>
<evidence type="ECO:0000303" key="2">
    <source>
    </source>
</evidence>
<evidence type="ECO:0000305" key="3"/>
<feature type="chain" id="PRO_0000285251" description="LanC-like protein 3">
    <location>
        <begin position="1"/>
        <end position="420"/>
    </location>
</feature>
<feature type="splice variant" id="VSP_024855" description="In isoform 2." evidence="1 2">
    <original>RFAQFLFTEEFKAGSRVLESIYSLYEGFSGTVCFLIDLLQPNQAEFPLFSVFV</original>
    <variation>SSFPVNLIKMEHLLYTRQHCF</variation>
    <location>
        <begin position="368"/>
        <end position="420"/>
    </location>
</feature>
<comment type="alternative products">
    <event type="alternative splicing"/>
    <isoform>
        <id>Q6ZV70-1</id>
        <name>1</name>
        <sequence type="displayed"/>
    </isoform>
    <isoform>
        <id>Q6ZV70-2</id>
        <name>2</name>
        <sequence type="described" ref="VSP_024855"/>
    </isoform>
</comment>
<comment type="similarity">
    <text evidence="3">Belongs to the LanC-like protein family.</text>
</comment>
<keyword id="KW-0025">Alternative splicing</keyword>
<keyword id="KW-1267">Proteomics identification</keyword>
<keyword id="KW-1185">Reference proteome</keyword>
<name>LANC3_HUMAN</name>
<sequence>MDTKRCFANRFDDYQGSLLAGQCEEAVAPLVTATIERILQELPPLGGGAEARGATAGASACQGGLYGGVAGVAYMLYHVSQSPLFATARERYLRSAKRLIDACARAEEWGEPDADTRAAFLLGGAGVYAVATLVYHALGRSDYVQPLGKFRALCAVCAPVSFLECGSDELFVGRAGYLCAALVLKQKLAQEVLTPAQIKSICQAILDSGKQYAIKKRKPFPLMYSYYGTEYLGAAHGLSSILQMLLSYHEHLKPSDRELVWQSVDFLMEQEQNCNWPPELGETIERENELVHWCHGAPGIAYLFAKAYLVSKKPQYLDTCIRCGELTWQKGLLKKGPGICHGVAGSAYVFLLLYRLTGNSKYIYRAQRFAQFLFTEEFKAGSRVLESIYSLYEGFSGTVCFLIDLLQPNQAEFPLFSVFV</sequence>
<organism>
    <name type="scientific">Homo sapiens</name>
    <name type="common">Human</name>
    <dbReference type="NCBI Taxonomy" id="9606"/>
    <lineage>
        <taxon>Eukaryota</taxon>
        <taxon>Metazoa</taxon>
        <taxon>Chordata</taxon>
        <taxon>Craniata</taxon>
        <taxon>Vertebrata</taxon>
        <taxon>Euteleostomi</taxon>
        <taxon>Mammalia</taxon>
        <taxon>Eutheria</taxon>
        <taxon>Euarchontoglires</taxon>
        <taxon>Primates</taxon>
        <taxon>Haplorrhini</taxon>
        <taxon>Catarrhini</taxon>
        <taxon>Hominidae</taxon>
        <taxon>Homo</taxon>
    </lineage>
</organism>
<reference key="1">
    <citation type="journal article" date="2004" name="Nat. Genet.">
        <title>Complete sequencing and characterization of 21,243 full-length human cDNAs.</title>
        <authorList>
            <person name="Ota T."/>
            <person name="Suzuki Y."/>
            <person name="Nishikawa T."/>
            <person name="Otsuki T."/>
            <person name="Sugiyama T."/>
            <person name="Irie R."/>
            <person name="Wakamatsu A."/>
            <person name="Hayashi K."/>
            <person name="Sato H."/>
            <person name="Nagai K."/>
            <person name="Kimura K."/>
            <person name="Makita H."/>
            <person name="Sekine M."/>
            <person name="Obayashi M."/>
            <person name="Nishi T."/>
            <person name="Shibahara T."/>
            <person name="Tanaka T."/>
            <person name="Ishii S."/>
            <person name="Yamamoto J."/>
            <person name="Saito K."/>
            <person name="Kawai Y."/>
            <person name="Isono Y."/>
            <person name="Nakamura Y."/>
            <person name="Nagahari K."/>
            <person name="Murakami K."/>
            <person name="Yasuda T."/>
            <person name="Iwayanagi T."/>
            <person name="Wagatsuma M."/>
            <person name="Shiratori A."/>
            <person name="Sudo H."/>
            <person name="Hosoiri T."/>
            <person name="Kaku Y."/>
            <person name="Kodaira H."/>
            <person name="Kondo H."/>
            <person name="Sugawara M."/>
            <person name="Takahashi M."/>
            <person name="Kanda K."/>
            <person name="Yokoi T."/>
            <person name="Furuya T."/>
            <person name="Kikkawa E."/>
            <person name="Omura Y."/>
            <person name="Abe K."/>
            <person name="Kamihara K."/>
            <person name="Katsuta N."/>
            <person name="Sato K."/>
            <person name="Tanikawa M."/>
            <person name="Yamazaki M."/>
            <person name="Ninomiya K."/>
            <person name="Ishibashi T."/>
            <person name="Yamashita H."/>
            <person name="Murakawa K."/>
            <person name="Fujimori K."/>
            <person name="Tanai H."/>
            <person name="Kimata M."/>
            <person name="Watanabe M."/>
            <person name="Hiraoka S."/>
            <person name="Chiba Y."/>
            <person name="Ishida S."/>
            <person name="Ono Y."/>
            <person name="Takiguchi S."/>
            <person name="Watanabe S."/>
            <person name="Yosida M."/>
            <person name="Hotuta T."/>
            <person name="Kusano J."/>
            <person name="Kanehori K."/>
            <person name="Takahashi-Fujii A."/>
            <person name="Hara H."/>
            <person name="Tanase T.-O."/>
            <person name="Nomura Y."/>
            <person name="Togiya S."/>
            <person name="Komai F."/>
            <person name="Hara R."/>
            <person name="Takeuchi K."/>
            <person name="Arita M."/>
            <person name="Imose N."/>
            <person name="Musashino K."/>
            <person name="Yuuki H."/>
            <person name="Oshima A."/>
            <person name="Sasaki N."/>
            <person name="Aotsuka S."/>
            <person name="Yoshikawa Y."/>
            <person name="Matsunawa H."/>
            <person name="Ichihara T."/>
            <person name="Shiohata N."/>
            <person name="Sano S."/>
            <person name="Moriya S."/>
            <person name="Momiyama H."/>
            <person name="Satoh N."/>
            <person name="Takami S."/>
            <person name="Terashima Y."/>
            <person name="Suzuki O."/>
            <person name="Nakagawa S."/>
            <person name="Senoh A."/>
            <person name="Mizoguchi H."/>
            <person name="Goto Y."/>
            <person name="Shimizu F."/>
            <person name="Wakebe H."/>
            <person name="Hishigaki H."/>
            <person name="Watanabe T."/>
            <person name="Sugiyama A."/>
            <person name="Takemoto M."/>
            <person name="Kawakami B."/>
            <person name="Yamazaki M."/>
            <person name="Watanabe K."/>
            <person name="Kumagai A."/>
            <person name="Itakura S."/>
            <person name="Fukuzumi Y."/>
            <person name="Fujimori Y."/>
            <person name="Komiyama M."/>
            <person name="Tashiro H."/>
            <person name="Tanigami A."/>
            <person name="Fujiwara T."/>
            <person name="Ono T."/>
            <person name="Yamada K."/>
            <person name="Fujii Y."/>
            <person name="Ozaki K."/>
            <person name="Hirao M."/>
            <person name="Ohmori Y."/>
            <person name="Kawabata A."/>
            <person name="Hikiji T."/>
            <person name="Kobatake N."/>
            <person name="Inagaki H."/>
            <person name="Ikema Y."/>
            <person name="Okamoto S."/>
            <person name="Okitani R."/>
            <person name="Kawakami T."/>
            <person name="Noguchi S."/>
            <person name="Itoh T."/>
            <person name="Shigeta K."/>
            <person name="Senba T."/>
            <person name="Matsumura K."/>
            <person name="Nakajima Y."/>
            <person name="Mizuno T."/>
            <person name="Morinaga M."/>
            <person name="Sasaki M."/>
            <person name="Togashi T."/>
            <person name="Oyama M."/>
            <person name="Hata H."/>
            <person name="Watanabe M."/>
            <person name="Komatsu T."/>
            <person name="Mizushima-Sugano J."/>
            <person name="Satoh T."/>
            <person name="Shirai Y."/>
            <person name="Takahashi Y."/>
            <person name="Nakagawa K."/>
            <person name="Okumura K."/>
            <person name="Nagase T."/>
            <person name="Nomura N."/>
            <person name="Kikuchi H."/>
            <person name="Masuho Y."/>
            <person name="Yamashita R."/>
            <person name="Nakai K."/>
            <person name="Yada T."/>
            <person name="Nakamura Y."/>
            <person name="Ohara O."/>
            <person name="Isogai T."/>
            <person name="Sugano S."/>
        </authorList>
    </citation>
    <scope>NUCLEOTIDE SEQUENCE [LARGE SCALE MRNA] (ISOFORM 2)</scope>
    <source>
        <tissue>Substantia nigra</tissue>
    </source>
</reference>
<reference key="2">
    <citation type="journal article" date="2005" name="Nature">
        <title>The DNA sequence of the human X chromosome.</title>
        <authorList>
            <person name="Ross M.T."/>
            <person name="Grafham D.V."/>
            <person name="Coffey A.J."/>
            <person name="Scherer S."/>
            <person name="McLay K."/>
            <person name="Muzny D."/>
            <person name="Platzer M."/>
            <person name="Howell G.R."/>
            <person name="Burrows C."/>
            <person name="Bird C.P."/>
            <person name="Frankish A."/>
            <person name="Lovell F.L."/>
            <person name="Howe K.L."/>
            <person name="Ashurst J.L."/>
            <person name="Fulton R.S."/>
            <person name="Sudbrak R."/>
            <person name="Wen G."/>
            <person name="Jones M.C."/>
            <person name="Hurles M.E."/>
            <person name="Andrews T.D."/>
            <person name="Scott C.E."/>
            <person name="Searle S."/>
            <person name="Ramser J."/>
            <person name="Whittaker A."/>
            <person name="Deadman R."/>
            <person name="Carter N.P."/>
            <person name="Hunt S.E."/>
            <person name="Chen R."/>
            <person name="Cree A."/>
            <person name="Gunaratne P."/>
            <person name="Havlak P."/>
            <person name="Hodgson A."/>
            <person name="Metzker M.L."/>
            <person name="Richards S."/>
            <person name="Scott G."/>
            <person name="Steffen D."/>
            <person name="Sodergren E."/>
            <person name="Wheeler D.A."/>
            <person name="Worley K.C."/>
            <person name="Ainscough R."/>
            <person name="Ambrose K.D."/>
            <person name="Ansari-Lari M.A."/>
            <person name="Aradhya S."/>
            <person name="Ashwell R.I."/>
            <person name="Babbage A.K."/>
            <person name="Bagguley C.L."/>
            <person name="Ballabio A."/>
            <person name="Banerjee R."/>
            <person name="Barker G.E."/>
            <person name="Barlow K.F."/>
            <person name="Barrett I.P."/>
            <person name="Bates K.N."/>
            <person name="Beare D.M."/>
            <person name="Beasley H."/>
            <person name="Beasley O."/>
            <person name="Beck A."/>
            <person name="Bethel G."/>
            <person name="Blechschmidt K."/>
            <person name="Brady N."/>
            <person name="Bray-Allen S."/>
            <person name="Bridgeman A.M."/>
            <person name="Brown A.J."/>
            <person name="Brown M.J."/>
            <person name="Bonnin D."/>
            <person name="Bruford E.A."/>
            <person name="Buhay C."/>
            <person name="Burch P."/>
            <person name="Burford D."/>
            <person name="Burgess J."/>
            <person name="Burrill W."/>
            <person name="Burton J."/>
            <person name="Bye J.M."/>
            <person name="Carder C."/>
            <person name="Carrel L."/>
            <person name="Chako J."/>
            <person name="Chapman J.C."/>
            <person name="Chavez D."/>
            <person name="Chen E."/>
            <person name="Chen G."/>
            <person name="Chen Y."/>
            <person name="Chen Z."/>
            <person name="Chinault C."/>
            <person name="Ciccodicola A."/>
            <person name="Clark S.Y."/>
            <person name="Clarke G."/>
            <person name="Clee C.M."/>
            <person name="Clegg S."/>
            <person name="Clerc-Blankenburg K."/>
            <person name="Clifford K."/>
            <person name="Cobley V."/>
            <person name="Cole C.G."/>
            <person name="Conquer J.S."/>
            <person name="Corby N."/>
            <person name="Connor R.E."/>
            <person name="David R."/>
            <person name="Davies J."/>
            <person name="Davis C."/>
            <person name="Davis J."/>
            <person name="Delgado O."/>
            <person name="Deshazo D."/>
            <person name="Dhami P."/>
            <person name="Ding Y."/>
            <person name="Dinh H."/>
            <person name="Dodsworth S."/>
            <person name="Draper H."/>
            <person name="Dugan-Rocha S."/>
            <person name="Dunham A."/>
            <person name="Dunn M."/>
            <person name="Durbin K.J."/>
            <person name="Dutta I."/>
            <person name="Eades T."/>
            <person name="Ellwood M."/>
            <person name="Emery-Cohen A."/>
            <person name="Errington H."/>
            <person name="Evans K.L."/>
            <person name="Faulkner L."/>
            <person name="Francis F."/>
            <person name="Frankland J."/>
            <person name="Fraser A.E."/>
            <person name="Galgoczy P."/>
            <person name="Gilbert J."/>
            <person name="Gill R."/>
            <person name="Gloeckner G."/>
            <person name="Gregory S.G."/>
            <person name="Gribble S."/>
            <person name="Griffiths C."/>
            <person name="Grocock R."/>
            <person name="Gu Y."/>
            <person name="Gwilliam R."/>
            <person name="Hamilton C."/>
            <person name="Hart E.A."/>
            <person name="Hawes A."/>
            <person name="Heath P.D."/>
            <person name="Heitmann K."/>
            <person name="Hennig S."/>
            <person name="Hernandez J."/>
            <person name="Hinzmann B."/>
            <person name="Ho S."/>
            <person name="Hoffs M."/>
            <person name="Howden P.J."/>
            <person name="Huckle E.J."/>
            <person name="Hume J."/>
            <person name="Hunt P.J."/>
            <person name="Hunt A.R."/>
            <person name="Isherwood J."/>
            <person name="Jacob L."/>
            <person name="Johnson D."/>
            <person name="Jones S."/>
            <person name="de Jong P.J."/>
            <person name="Joseph S.S."/>
            <person name="Keenan S."/>
            <person name="Kelly S."/>
            <person name="Kershaw J.K."/>
            <person name="Khan Z."/>
            <person name="Kioschis P."/>
            <person name="Klages S."/>
            <person name="Knights A.J."/>
            <person name="Kosiura A."/>
            <person name="Kovar-Smith C."/>
            <person name="Laird G.K."/>
            <person name="Langford C."/>
            <person name="Lawlor S."/>
            <person name="Leversha M."/>
            <person name="Lewis L."/>
            <person name="Liu W."/>
            <person name="Lloyd C."/>
            <person name="Lloyd D.M."/>
            <person name="Loulseged H."/>
            <person name="Loveland J.E."/>
            <person name="Lovell J.D."/>
            <person name="Lozado R."/>
            <person name="Lu J."/>
            <person name="Lyne R."/>
            <person name="Ma J."/>
            <person name="Maheshwari M."/>
            <person name="Matthews L.H."/>
            <person name="McDowall J."/>
            <person name="McLaren S."/>
            <person name="McMurray A."/>
            <person name="Meidl P."/>
            <person name="Meitinger T."/>
            <person name="Milne S."/>
            <person name="Miner G."/>
            <person name="Mistry S.L."/>
            <person name="Morgan M."/>
            <person name="Morris S."/>
            <person name="Mueller I."/>
            <person name="Mullikin J.C."/>
            <person name="Nguyen N."/>
            <person name="Nordsiek G."/>
            <person name="Nyakatura G."/>
            <person name="O'dell C.N."/>
            <person name="Okwuonu G."/>
            <person name="Palmer S."/>
            <person name="Pandian R."/>
            <person name="Parker D."/>
            <person name="Parrish J."/>
            <person name="Pasternak S."/>
            <person name="Patel D."/>
            <person name="Pearce A.V."/>
            <person name="Pearson D.M."/>
            <person name="Pelan S.E."/>
            <person name="Perez L."/>
            <person name="Porter K.M."/>
            <person name="Ramsey Y."/>
            <person name="Reichwald K."/>
            <person name="Rhodes S."/>
            <person name="Ridler K.A."/>
            <person name="Schlessinger D."/>
            <person name="Schueler M.G."/>
            <person name="Sehra H.K."/>
            <person name="Shaw-Smith C."/>
            <person name="Shen H."/>
            <person name="Sheridan E.M."/>
            <person name="Shownkeen R."/>
            <person name="Skuce C.D."/>
            <person name="Smith M.L."/>
            <person name="Sotheran E.C."/>
            <person name="Steingruber H.E."/>
            <person name="Steward C.A."/>
            <person name="Storey R."/>
            <person name="Swann R.M."/>
            <person name="Swarbreck D."/>
            <person name="Tabor P.E."/>
            <person name="Taudien S."/>
            <person name="Taylor T."/>
            <person name="Teague B."/>
            <person name="Thomas K."/>
            <person name="Thorpe A."/>
            <person name="Timms K."/>
            <person name="Tracey A."/>
            <person name="Trevanion S."/>
            <person name="Tromans A.C."/>
            <person name="d'Urso M."/>
            <person name="Verduzco D."/>
            <person name="Villasana D."/>
            <person name="Waldron L."/>
            <person name="Wall M."/>
            <person name="Wang Q."/>
            <person name="Warren J."/>
            <person name="Warry G.L."/>
            <person name="Wei X."/>
            <person name="West A."/>
            <person name="Whitehead S.L."/>
            <person name="Whiteley M.N."/>
            <person name="Wilkinson J.E."/>
            <person name="Willey D.L."/>
            <person name="Williams G."/>
            <person name="Williams L."/>
            <person name="Williamson A."/>
            <person name="Williamson H."/>
            <person name="Wilming L."/>
            <person name="Woodmansey R.L."/>
            <person name="Wray P.W."/>
            <person name="Yen J."/>
            <person name="Zhang J."/>
            <person name="Zhou J."/>
            <person name="Zoghbi H."/>
            <person name="Zorilla S."/>
            <person name="Buck D."/>
            <person name="Reinhardt R."/>
            <person name="Poustka A."/>
            <person name="Rosenthal A."/>
            <person name="Lehrach H."/>
            <person name="Meindl A."/>
            <person name="Minx P.J."/>
            <person name="Hillier L.W."/>
            <person name="Willard H.F."/>
            <person name="Wilson R.K."/>
            <person name="Waterston R.H."/>
            <person name="Rice C.M."/>
            <person name="Vaudin M."/>
            <person name="Coulson A."/>
            <person name="Nelson D.L."/>
            <person name="Weinstock G."/>
            <person name="Sulston J.E."/>
            <person name="Durbin R.M."/>
            <person name="Hubbard T."/>
            <person name="Gibbs R.A."/>
            <person name="Beck S."/>
            <person name="Rogers J."/>
            <person name="Bentley D.R."/>
        </authorList>
    </citation>
    <scope>NUCLEOTIDE SEQUENCE [LARGE SCALE GENOMIC DNA]</scope>
</reference>
<reference key="3">
    <citation type="journal article" date="2004" name="Genome Res.">
        <title>The status, quality, and expansion of the NIH full-length cDNA project: the Mammalian Gene Collection (MGC).</title>
        <authorList>
            <consortium name="The MGC Project Team"/>
        </authorList>
    </citation>
    <scope>NUCLEOTIDE SEQUENCE [LARGE SCALE MRNA] (ISOFORM 2)</scope>
    <source>
        <tissue>Heart</tissue>
        <tissue>Lung</tissue>
    </source>
</reference>
<dbReference type="EMBL" id="AK124915">
    <property type="protein sequence ID" value="BAC85993.1"/>
    <property type="molecule type" value="mRNA"/>
</dbReference>
<dbReference type="EMBL" id="AL627244">
    <property type="status" value="NOT_ANNOTATED_CDS"/>
    <property type="molecule type" value="Genomic_DNA"/>
</dbReference>
<dbReference type="EMBL" id="AL121577">
    <property type="status" value="NOT_ANNOTATED_CDS"/>
    <property type="molecule type" value="Genomic_DNA"/>
</dbReference>
<dbReference type="EMBL" id="BC093667">
    <property type="protein sequence ID" value="AAH93667.1"/>
    <property type="molecule type" value="mRNA"/>
</dbReference>
<dbReference type="EMBL" id="BC093669">
    <property type="protein sequence ID" value="AAH93669.1"/>
    <property type="molecule type" value="mRNA"/>
</dbReference>
<dbReference type="CCDS" id="CCDS14240.1">
    <molecule id="Q6ZV70-2"/>
</dbReference>
<dbReference type="CCDS" id="CCDS55398.1">
    <molecule id="Q6ZV70-1"/>
</dbReference>
<dbReference type="RefSeq" id="NP_001163802.1">
    <molecule id="Q6ZV70-1"/>
    <property type="nucleotide sequence ID" value="NM_001170331.2"/>
</dbReference>
<dbReference type="RefSeq" id="NP_940913.1">
    <molecule id="Q6ZV70-2"/>
    <property type="nucleotide sequence ID" value="NM_198511.3"/>
</dbReference>
<dbReference type="SMR" id="Q6ZV70"/>
<dbReference type="BioGRID" id="131432">
    <property type="interactions" value="4"/>
</dbReference>
<dbReference type="FunCoup" id="Q6ZV70">
    <property type="interactions" value="110"/>
</dbReference>
<dbReference type="IntAct" id="Q6ZV70">
    <property type="interactions" value="1"/>
</dbReference>
<dbReference type="STRING" id="9606.ENSP00000367882"/>
<dbReference type="iPTMnet" id="Q6ZV70"/>
<dbReference type="PhosphoSitePlus" id="Q6ZV70"/>
<dbReference type="BioMuta" id="LANCL3"/>
<dbReference type="DMDM" id="146324960"/>
<dbReference type="MassIVE" id="Q6ZV70"/>
<dbReference type="PaxDb" id="9606-ENSP00000367882"/>
<dbReference type="PeptideAtlas" id="Q6ZV70"/>
<dbReference type="ProteomicsDB" id="68395">
    <molecule id="Q6ZV70-1"/>
</dbReference>
<dbReference type="ProteomicsDB" id="68396">
    <molecule id="Q6ZV70-2"/>
</dbReference>
<dbReference type="Pumba" id="Q6ZV70"/>
<dbReference type="Antibodypedia" id="585">
    <property type="antibodies" value="79 antibodies from 17 providers"/>
</dbReference>
<dbReference type="DNASU" id="347404"/>
<dbReference type="Ensembl" id="ENST00000378619.4">
    <molecule id="Q6ZV70-1"/>
    <property type="protein sequence ID" value="ENSP00000367882.4"/>
    <property type="gene ID" value="ENSG00000147036.12"/>
</dbReference>
<dbReference type="Ensembl" id="ENST00000378621.7">
    <molecule id="Q6ZV70-2"/>
    <property type="protein sequence ID" value="ENSP00000367885.3"/>
    <property type="gene ID" value="ENSG00000147036.12"/>
</dbReference>
<dbReference type="Ensembl" id="ENST00000614025.4">
    <molecule id="Q6ZV70-2"/>
    <property type="protein sequence ID" value="ENSP00000479231.1"/>
    <property type="gene ID" value="ENSG00000147036.12"/>
</dbReference>
<dbReference type="GeneID" id="347404"/>
<dbReference type="KEGG" id="hsa:347404"/>
<dbReference type="MANE-Select" id="ENST00000378619.4">
    <property type="protein sequence ID" value="ENSP00000367882.4"/>
    <property type="RefSeq nucleotide sequence ID" value="NM_001170331.2"/>
    <property type="RefSeq protein sequence ID" value="NP_001163802.1"/>
</dbReference>
<dbReference type="UCSC" id="uc004ddp.3">
    <molecule id="Q6ZV70-1"/>
    <property type="organism name" value="human"/>
</dbReference>
<dbReference type="AGR" id="HGNC:24767"/>
<dbReference type="CTD" id="347404"/>
<dbReference type="GeneCards" id="LANCL3"/>
<dbReference type="HGNC" id="HGNC:24767">
    <property type="gene designation" value="LANCL3"/>
</dbReference>
<dbReference type="HPA" id="ENSG00000147036">
    <property type="expression patterns" value="Tissue enhanced (esophagus)"/>
</dbReference>
<dbReference type="neXtProt" id="NX_Q6ZV70"/>
<dbReference type="OpenTargets" id="ENSG00000147036"/>
<dbReference type="PharmGKB" id="PA134879796"/>
<dbReference type="VEuPathDB" id="HostDB:ENSG00000147036"/>
<dbReference type="eggNOG" id="KOG2787">
    <property type="taxonomic scope" value="Eukaryota"/>
</dbReference>
<dbReference type="GeneTree" id="ENSGT00530000063186"/>
<dbReference type="HOGENOM" id="CLU_036244_0_1_1"/>
<dbReference type="InParanoid" id="Q6ZV70"/>
<dbReference type="OMA" id="YQEGCGE"/>
<dbReference type="OrthoDB" id="10257263at2759"/>
<dbReference type="PAN-GO" id="Q6ZV70">
    <property type="GO annotations" value="1 GO annotation based on evolutionary models"/>
</dbReference>
<dbReference type="PhylomeDB" id="Q6ZV70"/>
<dbReference type="TreeFam" id="TF300068"/>
<dbReference type="PathwayCommons" id="Q6ZV70"/>
<dbReference type="BioGRID-ORCS" id="347404">
    <property type="hits" value="23 hits in 779 CRISPR screens"/>
</dbReference>
<dbReference type="GenomeRNAi" id="347404"/>
<dbReference type="Pharos" id="Q6ZV70">
    <property type="development level" value="Tdark"/>
</dbReference>
<dbReference type="PRO" id="PR:Q6ZV70"/>
<dbReference type="Proteomes" id="UP000005640">
    <property type="component" value="Chromosome X"/>
</dbReference>
<dbReference type="RNAct" id="Q6ZV70">
    <property type="molecule type" value="protein"/>
</dbReference>
<dbReference type="Bgee" id="ENSG00000147036">
    <property type="expression patterns" value="Expressed in dorsal root ganglion and 87 other cell types or tissues"/>
</dbReference>
<dbReference type="GO" id="GO:0005886">
    <property type="term" value="C:plasma membrane"/>
    <property type="evidence" value="ECO:0000318"/>
    <property type="project" value="GO_Central"/>
</dbReference>
<dbReference type="GO" id="GO:0005975">
    <property type="term" value="P:carbohydrate metabolic process"/>
    <property type="evidence" value="ECO:0007669"/>
    <property type="project" value="InterPro"/>
</dbReference>
<dbReference type="GO" id="GO:0031179">
    <property type="term" value="P:peptide modification"/>
    <property type="evidence" value="ECO:0007669"/>
    <property type="project" value="InterPro"/>
</dbReference>
<dbReference type="CDD" id="cd04794">
    <property type="entry name" value="euk_LANCL"/>
    <property type="match status" value="1"/>
</dbReference>
<dbReference type="FunFam" id="1.50.10.10:FF:000012">
    <property type="entry name" value="LanC-like protein 3"/>
    <property type="match status" value="1"/>
</dbReference>
<dbReference type="Gene3D" id="1.50.10.10">
    <property type="match status" value="1"/>
</dbReference>
<dbReference type="InterPro" id="IPR012341">
    <property type="entry name" value="6hp_glycosidase-like_sf"/>
</dbReference>
<dbReference type="InterPro" id="IPR007822">
    <property type="entry name" value="LANC-like"/>
</dbReference>
<dbReference type="InterPro" id="IPR020464">
    <property type="entry name" value="LanC-like_prot_euk"/>
</dbReference>
<dbReference type="PANTHER" id="PTHR12736">
    <property type="entry name" value="LANC-LIKE PROTEIN"/>
    <property type="match status" value="1"/>
</dbReference>
<dbReference type="PANTHER" id="PTHR12736:SF7">
    <property type="entry name" value="LANC-LIKE PROTEIN 3"/>
    <property type="match status" value="1"/>
</dbReference>
<dbReference type="Pfam" id="PF05147">
    <property type="entry name" value="LANC_like"/>
    <property type="match status" value="1"/>
</dbReference>
<dbReference type="PRINTS" id="PR01951">
    <property type="entry name" value="LANCEUKARYTE"/>
</dbReference>
<dbReference type="PRINTS" id="PR01950">
    <property type="entry name" value="LANCSUPER"/>
</dbReference>
<dbReference type="SMART" id="SM01260">
    <property type="entry name" value="LANC_like"/>
    <property type="match status" value="1"/>
</dbReference>
<dbReference type="SUPFAM" id="SSF158745">
    <property type="entry name" value="LanC-like"/>
    <property type="match status" value="1"/>
</dbReference>
<protein>
    <recommendedName>
        <fullName>LanC-like protein 3</fullName>
    </recommendedName>
</protein>
<proteinExistence type="evidence at protein level"/>
<gene>
    <name type="primary">LANCL3</name>
</gene>